<dbReference type="EC" id="6.1.1.17" evidence="1"/>
<dbReference type="EMBL" id="CP000970">
    <property type="protein sequence ID" value="ACB15496.1"/>
    <property type="molecule type" value="Genomic_DNA"/>
</dbReference>
<dbReference type="RefSeq" id="WP_000695676.1">
    <property type="nucleotide sequence ID" value="NC_010498.1"/>
</dbReference>
<dbReference type="SMR" id="B1LMJ5"/>
<dbReference type="KEGG" id="ecm:EcSMS35_2552"/>
<dbReference type="HOGENOM" id="CLU_015768_6_0_6"/>
<dbReference type="Proteomes" id="UP000007011">
    <property type="component" value="Chromosome"/>
</dbReference>
<dbReference type="GO" id="GO:0005829">
    <property type="term" value="C:cytosol"/>
    <property type="evidence" value="ECO:0007669"/>
    <property type="project" value="TreeGrafter"/>
</dbReference>
<dbReference type="GO" id="GO:0005524">
    <property type="term" value="F:ATP binding"/>
    <property type="evidence" value="ECO:0007669"/>
    <property type="project" value="UniProtKB-UniRule"/>
</dbReference>
<dbReference type="GO" id="GO:0004818">
    <property type="term" value="F:glutamate-tRNA ligase activity"/>
    <property type="evidence" value="ECO:0007669"/>
    <property type="project" value="UniProtKB-UniRule"/>
</dbReference>
<dbReference type="GO" id="GO:0000049">
    <property type="term" value="F:tRNA binding"/>
    <property type="evidence" value="ECO:0007669"/>
    <property type="project" value="InterPro"/>
</dbReference>
<dbReference type="GO" id="GO:0008270">
    <property type="term" value="F:zinc ion binding"/>
    <property type="evidence" value="ECO:0007669"/>
    <property type="project" value="UniProtKB-UniRule"/>
</dbReference>
<dbReference type="GO" id="GO:0006424">
    <property type="term" value="P:glutamyl-tRNA aminoacylation"/>
    <property type="evidence" value="ECO:0007669"/>
    <property type="project" value="UniProtKB-UniRule"/>
</dbReference>
<dbReference type="CDD" id="cd00808">
    <property type="entry name" value="GluRS_core"/>
    <property type="match status" value="1"/>
</dbReference>
<dbReference type="FunFam" id="1.10.10.350:FF:000001">
    <property type="entry name" value="Glutamate--tRNA ligase"/>
    <property type="match status" value="1"/>
</dbReference>
<dbReference type="FunFam" id="3.40.50.620:FF:000007">
    <property type="entry name" value="Glutamate--tRNA ligase"/>
    <property type="match status" value="1"/>
</dbReference>
<dbReference type="Gene3D" id="1.10.10.350">
    <property type="match status" value="1"/>
</dbReference>
<dbReference type="Gene3D" id="3.40.50.620">
    <property type="entry name" value="HUPs"/>
    <property type="match status" value="1"/>
</dbReference>
<dbReference type="HAMAP" id="MF_00022">
    <property type="entry name" value="Glu_tRNA_synth_type1"/>
    <property type="match status" value="1"/>
</dbReference>
<dbReference type="InterPro" id="IPR045462">
    <property type="entry name" value="aa-tRNA-synth_I_cd-bd"/>
</dbReference>
<dbReference type="InterPro" id="IPR020751">
    <property type="entry name" value="aa-tRNA-synth_I_codon-bd_sub2"/>
</dbReference>
<dbReference type="InterPro" id="IPR001412">
    <property type="entry name" value="aa-tRNA-synth_I_CS"/>
</dbReference>
<dbReference type="InterPro" id="IPR008925">
    <property type="entry name" value="aa_tRNA-synth_I_cd-bd_sf"/>
</dbReference>
<dbReference type="InterPro" id="IPR004527">
    <property type="entry name" value="Glu-tRNA-ligase_bac/mito"/>
</dbReference>
<dbReference type="InterPro" id="IPR000924">
    <property type="entry name" value="Glu/Gln-tRNA-synth"/>
</dbReference>
<dbReference type="InterPro" id="IPR020058">
    <property type="entry name" value="Glu/Gln-tRNA-synth_Ib_cat-dom"/>
</dbReference>
<dbReference type="InterPro" id="IPR049940">
    <property type="entry name" value="GluQ/Sye"/>
</dbReference>
<dbReference type="InterPro" id="IPR033910">
    <property type="entry name" value="GluRS_core"/>
</dbReference>
<dbReference type="InterPro" id="IPR014729">
    <property type="entry name" value="Rossmann-like_a/b/a_fold"/>
</dbReference>
<dbReference type="NCBIfam" id="TIGR00464">
    <property type="entry name" value="gltX_bact"/>
    <property type="match status" value="1"/>
</dbReference>
<dbReference type="PANTHER" id="PTHR43311">
    <property type="entry name" value="GLUTAMATE--TRNA LIGASE"/>
    <property type="match status" value="1"/>
</dbReference>
<dbReference type="PANTHER" id="PTHR43311:SF2">
    <property type="entry name" value="GLUTAMATE--TRNA LIGASE, MITOCHONDRIAL-RELATED"/>
    <property type="match status" value="1"/>
</dbReference>
<dbReference type="Pfam" id="PF19269">
    <property type="entry name" value="Anticodon_2"/>
    <property type="match status" value="1"/>
</dbReference>
<dbReference type="Pfam" id="PF00749">
    <property type="entry name" value="tRNA-synt_1c"/>
    <property type="match status" value="1"/>
</dbReference>
<dbReference type="PRINTS" id="PR00987">
    <property type="entry name" value="TRNASYNTHGLU"/>
</dbReference>
<dbReference type="SUPFAM" id="SSF48163">
    <property type="entry name" value="An anticodon-binding domain of class I aminoacyl-tRNA synthetases"/>
    <property type="match status" value="1"/>
</dbReference>
<dbReference type="SUPFAM" id="SSF52374">
    <property type="entry name" value="Nucleotidylyl transferase"/>
    <property type="match status" value="1"/>
</dbReference>
<dbReference type="PROSITE" id="PS00178">
    <property type="entry name" value="AA_TRNA_LIGASE_I"/>
    <property type="match status" value="1"/>
</dbReference>
<protein>
    <recommendedName>
        <fullName evidence="1">Glutamate--tRNA ligase</fullName>
        <ecNumber evidence="1">6.1.1.17</ecNumber>
    </recommendedName>
    <alternativeName>
        <fullName evidence="1">Glutamyl-tRNA synthetase</fullName>
        <shortName evidence="1">GluRS</shortName>
    </alternativeName>
</protein>
<comment type="function">
    <text evidence="1">Catalyzes the attachment of glutamate to tRNA(Glu) in a two-step reaction: glutamate is first activated by ATP to form Glu-AMP and then transferred to the acceptor end of tRNA(Glu).</text>
</comment>
<comment type="catalytic activity">
    <reaction evidence="1">
        <text>tRNA(Glu) + L-glutamate + ATP = L-glutamyl-tRNA(Glu) + AMP + diphosphate</text>
        <dbReference type="Rhea" id="RHEA:23540"/>
        <dbReference type="Rhea" id="RHEA-COMP:9663"/>
        <dbReference type="Rhea" id="RHEA-COMP:9680"/>
        <dbReference type="ChEBI" id="CHEBI:29985"/>
        <dbReference type="ChEBI" id="CHEBI:30616"/>
        <dbReference type="ChEBI" id="CHEBI:33019"/>
        <dbReference type="ChEBI" id="CHEBI:78442"/>
        <dbReference type="ChEBI" id="CHEBI:78520"/>
        <dbReference type="ChEBI" id="CHEBI:456215"/>
        <dbReference type="EC" id="6.1.1.17"/>
    </reaction>
</comment>
<comment type="cofactor">
    <cofactor evidence="1">
        <name>Zn(2+)</name>
        <dbReference type="ChEBI" id="CHEBI:29105"/>
    </cofactor>
    <text evidence="1">Binds 1 zinc ion per subunit.</text>
</comment>
<comment type="subunit">
    <text evidence="1">Monomer.</text>
</comment>
<comment type="subcellular location">
    <subcellularLocation>
        <location evidence="1">Cytoplasm</location>
    </subcellularLocation>
</comment>
<comment type="similarity">
    <text evidence="1">Belongs to the class-I aminoacyl-tRNA synthetase family. Glutamate--tRNA ligase type 1 subfamily.</text>
</comment>
<keyword id="KW-0030">Aminoacyl-tRNA synthetase</keyword>
<keyword id="KW-0067">ATP-binding</keyword>
<keyword id="KW-0963">Cytoplasm</keyword>
<keyword id="KW-0436">Ligase</keyword>
<keyword id="KW-0479">Metal-binding</keyword>
<keyword id="KW-0547">Nucleotide-binding</keyword>
<keyword id="KW-0648">Protein biosynthesis</keyword>
<keyword id="KW-0862">Zinc</keyword>
<organism>
    <name type="scientific">Escherichia coli (strain SMS-3-5 / SECEC)</name>
    <dbReference type="NCBI Taxonomy" id="439855"/>
    <lineage>
        <taxon>Bacteria</taxon>
        <taxon>Pseudomonadati</taxon>
        <taxon>Pseudomonadota</taxon>
        <taxon>Gammaproteobacteria</taxon>
        <taxon>Enterobacterales</taxon>
        <taxon>Enterobacteriaceae</taxon>
        <taxon>Escherichia</taxon>
    </lineage>
</organism>
<accession>B1LMJ5</accession>
<name>SYE_ECOSM</name>
<proteinExistence type="inferred from homology"/>
<feature type="chain" id="PRO_0000367670" description="Glutamate--tRNA ligase">
    <location>
        <begin position="1"/>
        <end position="471"/>
    </location>
</feature>
<feature type="short sequence motif" description="'HIGH' region" evidence="1">
    <location>
        <begin position="9"/>
        <end position="19"/>
    </location>
</feature>
<feature type="short sequence motif" description="'KMSKS' region" evidence="1">
    <location>
        <begin position="237"/>
        <end position="241"/>
    </location>
</feature>
<feature type="binding site" evidence="1">
    <location>
        <position position="98"/>
    </location>
    <ligand>
        <name>Zn(2+)</name>
        <dbReference type="ChEBI" id="CHEBI:29105"/>
    </ligand>
</feature>
<feature type="binding site" evidence="1">
    <location>
        <position position="100"/>
    </location>
    <ligand>
        <name>Zn(2+)</name>
        <dbReference type="ChEBI" id="CHEBI:29105"/>
    </ligand>
</feature>
<feature type="binding site" evidence="1">
    <location>
        <position position="125"/>
    </location>
    <ligand>
        <name>Zn(2+)</name>
        <dbReference type="ChEBI" id="CHEBI:29105"/>
    </ligand>
</feature>
<feature type="binding site" evidence="1">
    <location>
        <position position="127"/>
    </location>
    <ligand>
        <name>Zn(2+)</name>
        <dbReference type="ChEBI" id="CHEBI:29105"/>
    </ligand>
</feature>
<feature type="binding site" evidence="1">
    <location>
        <position position="240"/>
    </location>
    <ligand>
        <name>ATP</name>
        <dbReference type="ChEBI" id="CHEBI:30616"/>
    </ligand>
</feature>
<gene>
    <name evidence="1" type="primary">gltX</name>
    <name type="ordered locus">EcSMS35_2552</name>
</gene>
<evidence type="ECO:0000255" key="1">
    <source>
        <dbReference type="HAMAP-Rule" id="MF_00022"/>
    </source>
</evidence>
<sequence length="471" mass="53772">MKIKTRFAPSPTGYLHVGGARTALYSWLFARNHGGEFVLRIEDTDLERSTPEAIEAIMDGMNWLSLEWDEGPYYQTKRFDRYNAVIDQMLEEGTAYKCYCSKERLEALREEQMAKGEKPRYDGRCRHSHEHHADDEPCVVRFANPQEGSVVFDDQIRGPIEFSNQELDDLIIRRTDGSPTYNFCVVVDDWDMEITHVIRGEDHINNTPRQINILKALNAPVPVYAHVSMINGDDGKKLSKRHGAVSVMQYRDDGYLPEALLNYLVRLGWSHGDQEIFTREEMIKYFTLNAVSKSASAFNTDKLLWLNHHYINALPPEYVATHLQWHIEQENIDTRNGPQLADLVKLLGERCKTLKEMAQTCRYFYEDFAEFDADAAKKHLRPVARQPLEVVRDKLAAITDWTAENVHHAIQATADELEVGMGKVGMPLRVAVTGAGQSPALDVTVHAIGKTRSIERINKALAFIAERENQQ</sequence>
<reference key="1">
    <citation type="journal article" date="2008" name="J. Bacteriol.">
        <title>Insights into the environmental resistance gene pool from the genome sequence of the multidrug-resistant environmental isolate Escherichia coli SMS-3-5.</title>
        <authorList>
            <person name="Fricke W.F."/>
            <person name="Wright M.S."/>
            <person name="Lindell A.H."/>
            <person name="Harkins D.M."/>
            <person name="Baker-Austin C."/>
            <person name="Ravel J."/>
            <person name="Stepanauskas R."/>
        </authorList>
    </citation>
    <scope>NUCLEOTIDE SEQUENCE [LARGE SCALE GENOMIC DNA]</scope>
    <source>
        <strain>SMS-3-5 / SECEC</strain>
    </source>
</reference>